<reference key="1">
    <citation type="journal article" date="2005" name="Nucleic Acids Res.">
        <title>Genome dynamics and diversity of Shigella species, the etiologic agents of bacillary dysentery.</title>
        <authorList>
            <person name="Yang F."/>
            <person name="Yang J."/>
            <person name="Zhang X."/>
            <person name="Chen L."/>
            <person name="Jiang Y."/>
            <person name="Yan Y."/>
            <person name="Tang X."/>
            <person name="Wang J."/>
            <person name="Xiong Z."/>
            <person name="Dong J."/>
            <person name="Xue Y."/>
            <person name="Zhu Y."/>
            <person name="Xu X."/>
            <person name="Sun L."/>
            <person name="Chen S."/>
            <person name="Nie H."/>
            <person name="Peng J."/>
            <person name="Xu J."/>
            <person name="Wang Y."/>
            <person name="Yuan Z."/>
            <person name="Wen Y."/>
            <person name="Yao Z."/>
            <person name="Shen Y."/>
            <person name="Qiang B."/>
            <person name="Hou Y."/>
            <person name="Yu J."/>
            <person name="Jin Q."/>
        </authorList>
    </citation>
    <scope>NUCLEOTIDE SEQUENCE [LARGE SCALE GENOMIC DNA]</scope>
    <source>
        <strain>Ss046</strain>
    </source>
</reference>
<gene>
    <name evidence="1" type="primary">arnE</name>
    <name type="ordered locus">SSON_2318.1</name>
</gene>
<evidence type="ECO:0000255" key="1">
    <source>
        <dbReference type="HAMAP-Rule" id="MF_01869"/>
    </source>
</evidence>
<organism>
    <name type="scientific">Shigella sonnei (strain Ss046)</name>
    <dbReference type="NCBI Taxonomy" id="300269"/>
    <lineage>
        <taxon>Bacteria</taxon>
        <taxon>Pseudomonadati</taxon>
        <taxon>Pseudomonadota</taxon>
        <taxon>Gammaproteobacteria</taxon>
        <taxon>Enterobacterales</taxon>
        <taxon>Enterobacteriaceae</taxon>
        <taxon>Shigella</taxon>
    </lineage>
</organism>
<dbReference type="EMBL" id="CP000038">
    <property type="status" value="NOT_ANNOTATED_CDS"/>
    <property type="molecule type" value="Genomic_DNA"/>
</dbReference>
<dbReference type="RefSeq" id="WP_000638031.1">
    <property type="nucleotide sequence ID" value="NC_007384.1"/>
</dbReference>
<dbReference type="SMR" id="P0CB31"/>
<dbReference type="GeneID" id="93774916"/>
<dbReference type="UniPathway" id="UPA00030"/>
<dbReference type="Proteomes" id="UP000002529">
    <property type="component" value="Chromosome"/>
</dbReference>
<dbReference type="GO" id="GO:0005886">
    <property type="term" value="C:plasma membrane"/>
    <property type="evidence" value="ECO:0007669"/>
    <property type="project" value="UniProtKB-SubCell"/>
</dbReference>
<dbReference type="GO" id="GO:1901505">
    <property type="term" value="F:carbohydrate derivative transmembrane transporter activity"/>
    <property type="evidence" value="ECO:0007669"/>
    <property type="project" value="InterPro"/>
</dbReference>
<dbReference type="GO" id="GO:0009245">
    <property type="term" value="P:lipid A biosynthetic process"/>
    <property type="evidence" value="ECO:0007669"/>
    <property type="project" value="UniProtKB-UniRule"/>
</dbReference>
<dbReference type="GO" id="GO:0009103">
    <property type="term" value="P:lipopolysaccharide biosynthetic process"/>
    <property type="evidence" value="ECO:0007669"/>
    <property type="project" value="UniProtKB-UniRule"/>
</dbReference>
<dbReference type="FunFam" id="1.10.3730.20:FF:000002">
    <property type="entry name" value="Probable 4-amino-4-deoxy-L-arabinose-phosphoundecaprenol flippase subunit ArnE"/>
    <property type="match status" value="1"/>
</dbReference>
<dbReference type="Gene3D" id="1.10.3730.20">
    <property type="match status" value="1"/>
</dbReference>
<dbReference type="HAMAP" id="MF_01869">
    <property type="entry name" value="Flippase_ArnE"/>
    <property type="match status" value="1"/>
</dbReference>
<dbReference type="InterPro" id="IPR000620">
    <property type="entry name" value="EamA_dom"/>
</dbReference>
<dbReference type="InterPro" id="IPR022883">
    <property type="entry name" value="Flippase_ArnE"/>
</dbReference>
<dbReference type="InterPro" id="IPR000390">
    <property type="entry name" value="Small_drug/metabolite_transptr"/>
</dbReference>
<dbReference type="NCBIfam" id="NF011625">
    <property type="entry name" value="PRK15051.1"/>
    <property type="match status" value="1"/>
</dbReference>
<dbReference type="PANTHER" id="PTHR30561:SF23">
    <property type="entry name" value="4-AMINO-4-DEOXY-L-ARABINOSE-PHOSPHOUNDECAPRENOL FLIPPASE SUBUNIT ARNE-RELATED"/>
    <property type="match status" value="1"/>
</dbReference>
<dbReference type="PANTHER" id="PTHR30561">
    <property type="entry name" value="SMR FAMILY PROTON-DEPENDENT DRUG EFFLUX TRANSPORTER SUGE"/>
    <property type="match status" value="1"/>
</dbReference>
<dbReference type="Pfam" id="PF00892">
    <property type="entry name" value="EamA"/>
    <property type="match status" value="1"/>
</dbReference>
<dbReference type="SUPFAM" id="SSF103481">
    <property type="entry name" value="Multidrug resistance efflux transporter EmrE"/>
    <property type="match status" value="1"/>
</dbReference>
<feature type="chain" id="PRO_0000383009" description="Probable 4-amino-4-deoxy-L-arabinose-phosphoundecaprenol flippase subunit ArnE">
    <location>
        <begin position="1"/>
        <end position="111"/>
    </location>
</feature>
<feature type="transmembrane region" description="Helical" evidence="1">
    <location>
        <begin position="36"/>
        <end position="56"/>
    </location>
</feature>
<feature type="transmembrane region" description="Helical" evidence="1">
    <location>
        <begin position="61"/>
        <end position="81"/>
    </location>
</feature>
<feature type="transmembrane region" description="Helical" evidence="1">
    <location>
        <begin position="88"/>
        <end position="108"/>
    </location>
</feature>
<feature type="domain" description="EamA" evidence="1">
    <location>
        <begin position="40"/>
        <end position="109"/>
    </location>
</feature>
<sequence>MIWLTLVFASLLSVAGQLCQKQATCFVAINKRRKHIVLWLGLALACLGLAMVLWLLVLQNVPVGIAYPMLSLNFVWVTLAAVKLWHEPVSPRHWCGVAFIIGGIVILGSTV</sequence>
<proteinExistence type="inferred from homology"/>
<comment type="function">
    <text evidence="1">Translocates 4-amino-4-deoxy-L-arabinose-phosphoundecaprenol (alpha-L-Ara4N-phosphoundecaprenol) from the cytoplasmic to the periplasmic side of the inner membrane.</text>
</comment>
<comment type="pathway">
    <text evidence="1">Bacterial outer membrane biogenesis; lipopolysaccharide biosynthesis.</text>
</comment>
<comment type="subunit">
    <text evidence="1">Heterodimer of ArnE and ArnF.</text>
</comment>
<comment type="subcellular location">
    <subcellularLocation>
        <location evidence="1">Cell inner membrane</location>
        <topology evidence="1">Multi-pass membrane protein</topology>
    </subcellularLocation>
</comment>
<comment type="similarity">
    <text evidence="1">Belongs to the ArnE family.</text>
</comment>
<protein>
    <recommendedName>
        <fullName evidence="1">Probable 4-amino-4-deoxy-L-arabinose-phosphoundecaprenol flippase subunit ArnE</fullName>
        <shortName evidence="1">L-Ara4N-phosphoundecaprenol flippase subunit ArnE</shortName>
    </recommendedName>
    <alternativeName>
        <fullName evidence="1">Undecaprenyl phosphate-aminoarabinose flippase subunit ArnE</fullName>
    </alternativeName>
</protein>
<accession>P0CB31</accession>
<keyword id="KW-0997">Cell inner membrane</keyword>
<keyword id="KW-1003">Cell membrane</keyword>
<keyword id="KW-0441">Lipid A biosynthesis</keyword>
<keyword id="KW-0444">Lipid biosynthesis</keyword>
<keyword id="KW-0443">Lipid metabolism</keyword>
<keyword id="KW-0448">Lipopolysaccharide biosynthesis</keyword>
<keyword id="KW-0472">Membrane</keyword>
<keyword id="KW-1185">Reference proteome</keyword>
<keyword id="KW-0812">Transmembrane</keyword>
<keyword id="KW-1133">Transmembrane helix</keyword>
<keyword id="KW-0813">Transport</keyword>
<name>ARNE_SHISS</name>